<sequence length="613" mass="66778">MQKSLLAIAMASLLTPISYLHAQEVQTNDTVVVTANRFEQVESSVLASISVVTKAEIEQLNVTTALDILKTLPGVEVNSQGGKGQISSIFLRGTSSKHTLVLVDGVKINSATAGGASLGLIPAFAIEQIEVVRGPRAAIYGSDAIGGVIHIKTIPANRQTKHDANLGYGNDDHSSLAWRSSGQLNDSTQASFVFSDEKSDGYRVNEVAPSGDSHGYQSQTLFGSLRHEIDDAWSVQFNGYQLSSDVEYANQFSGVKNESNTDFYSIAGSLNFHKDNYSSQLMVSRSDNESWDGVASGMVAKTALFSSRNSVSWLNHWVVVPALTLAAGVDYDQENARQGGANATNYSKTEKDNKAAYVTAHFSKNIVTAEASIRSDDDSAFGKHNTWNLGLGIAPSDYVEFIASTGTGFKAPTFNDLYWPSSGNPNLKPETSKSSEVGIRSYLPFVQIDISAYRNEIEDMIDWAPTGPGGAWTPSNIDNAKIEGIEIEALFETGVIEHRVSAEWKDPRDKSDDSFLIRRARENFSWVSTYSADRFGFSAVANYVGDRKDSTGKTMDAYTLLDISANYKMTEALTLGARVGNLFDKEYQTAHSSGGKYYVGEGRNWFATVNYRF</sequence>
<keyword id="KW-0998">Cell outer membrane</keyword>
<keyword id="KW-0406">Ion transport</keyword>
<keyword id="KW-0472">Membrane</keyword>
<keyword id="KW-0626">Porin</keyword>
<keyword id="KW-0732">Signal</keyword>
<keyword id="KW-0798">TonB box</keyword>
<keyword id="KW-0812">Transmembrane</keyword>
<keyword id="KW-1134">Transmembrane beta strand</keyword>
<keyword id="KW-0813">Transport</keyword>
<organism>
    <name type="scientific">Vibrio vulnificus (strain YJ016)</name>
    <dbReference type="NCBI Taxonomy" id="196600"/>
    <lineage>
        <taxon>Bacteria</taxon>
        <taxon>Pseudomonadati</taxon>
        <taxon>Pseudomonadota</taxon>
        <taxon>Gammaproteobacteria</taxon>
        <taxon>Vibrionales</taxon>
        <taxon>Vibrionaceae</taxon>
        <taxon>Vibrio</taxon>
    </lineage>
</organism>
<comment type="function">
    <text evidence="1">Involved in the active translocation of vitamin B12 (cyanocobalamin) across the outer membrane to the periplasmic space. It derives its energy for transport by interacting with the trans-periplasmic membrane protein TonB.</text>
</comment>
<comment type="subcellular location">
    <subcellularLocation>
        <location evidence="1">Cell outer membrane</location>
        <topology evidence="1">Multi-pass membrane protein</topology>
    </subcellularLocation>
</comment>
<comment type="similarity">
    <text evidence="1">Belongs to the TonB-dependent receptor family. BtuB (TC 1.B.14.3.1) subfamily.</text>
</comment>
<protein>
    <recommendedName>
        <fullName evidence="1">Vitamin B12 transporter BtuB</fullName>
    </recommendedName>
    <alternativeName>
        <fullName evidence="1">Cobalamin receptor</fullName>
    </alternativeName>
    <alternativeName>
        <fullName evidence="1">Outer membrane cobalamin translocator</fullName>
    </alternativeName>
</protein>
<proteinExistence type="inferred from homology"/>
<accession>Q7MQ42</accession>
<reference key="1">
    <citation type="journal article" date="2003" name="Genome Res.">
        <title>Comparative genome analysis of Vibrio vulnificus, a marine pathogen.</title>
        <authorList>
            <person name="Chen C.-Y."/>
            <person name="Wu K.-M."/>
            <person name="Chang Y.-C."/>
            <person name="Chang C.-H."/>
            <person name="Tsai H.-C."/>
            <person name="Liao T.-L."/>
            <person name="Liu Y.-M."/>
            <person name="Chen H.-J."/>
            <person name="Shen A.B.-T."/>
            <person name="Li J.-C."/>
            <person name="Su T.-L."/>
            <person name="Shao C.-P."/>
            <person name="Lee C.-T."/>
            <person name="Hor L.-I."/>
            <person name="Tsai S.-F."/>
        </authorList>
    </citation>
    <scope>NUCLEOTIDE SEQUENCE [LARGE SCALE GENOMIC DNA]</scope>
    <source>
        <strain>YJ016</strain>
    </source>
</reference>
<name>BTUB_VIBVY</name>
<gene>
    <name evidence="1" type="primary">btuB</name>
    <name type="ordered locus">VV0166</name>
</gene>
<dbReference type="EMBL" id="BA000037">
    <property type="protein sequence ID" value="BAC92930.1"/>
    <property type="molecule type" value="Genomic_DNA"/>
</dbReference>
<dbReference type="RefSeq" id="WP_011149173.1">
    <property type="nucleotide sequence ID" value="NC_005139.1"/>
</dbReference>
<dbReference type="SMR" id="Q7MQ42"/>
<dbReference type="STRING" id="672.VV93_v1c01540"/>
<dbReference type="KEGG" id="vvy:VV0166"/>
<dbReference type="PATRIC" id="fig|196600.6.peg.209"/>
<dbReference type="eggNOG" id="COG4206">
    <property type="taxonomic scope" value="Bacteria"/>
</dbReference>
<dbReference type="HOGENOM" id="CLU_008287_18_5_6"/>
<dbReference type="Proteomes" id="UP000002675">
    <property type="component" value="Chromosome I"/>
</dbReference>
<dbReference type="GO" id="GO:0009279">
    <property type="term" value="C:cell outer membrane"/>
    <property type="evidence" value="ECO:0007669"/>
    <property type="project" value="UniProtKB-SubCell"/>
</dbReference>
<dbReference type="GO" id="GO:0046930">
    <property type="term" value="C:pore complex"/>
    <property type="evidence" value="ECO:0007669"/>
    <property type="project" value="UniProtKB-KW"/>
</dbReference>
<dbReference type="GO" id="GO:0015420">
    <property type="term" value="F:ABC-type vitamin B12 transporter activity"/>
    <property type="evidence" value="ECO:0007669"/>
    <property type="project" value="InterPro"/>
</dbReference>
<dbReference type="GO" id="GO:0015288">
    <property type="term" value="F:porin activity"/>
    <property type="evidence" value="ECO:0007669"/>
    <property type="project" value="UniProtKB-KW"/>
</dbReference>
<dbReference type="GO" id="GO:0006811">
    <property type="term" value="P:monoatomic ion transport"/>
    <property type="evidence" value="ECO:0007669"/>
    <property type="project" value="UniProtKB-KW"/>
</dbReference>
<dbReference type="CDD" id="cd01347">
    <property type="entry name" value="ligand_gated_channel"/>
    <property type="match status" value="1"/>
</dbReference>
<dbReference type="Gene3D" id="2.40.170.20">
    <property type="entry name" value="TonB-dependent receptor, beta-barrel domain"/>
    <property type="match status" value="1"/>
</dbReference>
<dbReference type="Gene3D" id="2.170.130.10">
    <property type="entry name" value="TonB-dependent receptor, plug domain"/>
    <property type="match status" value="1"/>
</dbReference>
<dbReference type="HAMAP" id="MF_01531">
    <property type="entry name" value="BtuB"/>
    <property type="match status" value="1"/>
</dbReference>
<dbReference type="InterPro" id="IPR010101">
    <property type="entry name" value="B12_transptr_BtuB"/>
</dbReference>
<dbReference type="InterPro" id="IPR012910">
    <property type="entry name" value="Plug_dom"/>
</dbReference>
<dbReference type="InterPro" id="IPR037066">
    <property type="entry name" value="Plug_dom_sf"/>
</dbReference>
<dbReference type="InterPro" id="IPR039426">
    <property type="entry name" value="TonB-dep_rcpt-like"/>
</dbReference>
<dbReference type="InterPro" id="IPR000531">
    <property type="entry name" value="TonB-dep_rcpt_b-brl"/>
</dbReference>
<dbReference type="InterPro" id="IPR010916">
    <property type="entry name" value="TonB_box_CS"/>
</dbReference>
<dbReference type="InterPro" id="IPR036942">
    <property type="entry name" value="TonB_rcpt_b-brl_sf"/>
</dbReference>
<dbReference type="PANTHER" id="PTHR30069:SF53">
    <property type="entry name" value="COLICIN I RECEPTOR-RELATED"/>
    <property type="match status" value="1"/>
</dbReference>
<dbReference type="PANTHER" id="PTHR30069">
    <property type="entry name" value="TONB-DEPENDENT OUTER MEMBRANE RECEPTOR"/>
    <property type="match status" value="1"/>
</dbReference>
<dbReference type="Pfam" id="PF07715">
    <property type="entry name" value="Plug"/>
    <property type="match status" value="1"/>
</dbReference>
<dbReference type="Pfam" id="PF00593">
    <property type="entry name" value="TonB_dep_Rec_b-barrel"/>
    <property type="match status" value="1"/>
</dbReference>
<dbReference type="SUPFAM" id="SSF56935">
    <property type="entry name" value="Porins"/>
    <property type="match status" value="1"/>
</dbReference>
<dbReference type="PROSITE" id="PS00430">
    <property type="entry name" value="TONB_DEPENDENT_REC_1"/>
    <property type="match status" value="1"/>
</dbReference>
<dbReference type="PROSITE" id="PS52016">
    <property type="entry name" value="TONB_DEPENDENT_REC_3"/>
    <property type="match status" value="1"/>
</dbReference>
<evidence type="ECO:0000255" key="1">
    <source>
        <dbReference type="HAMAP-Rule" id="MF_01531"/>
    </source>
</evidence>
<evidence type="ECO:0000255" key="2">
    <source>
        <dbReference type="PROSITE-ProRule" id="PRU01360"/>
    </source>
</evidence>
<feature type="signal peptide" evidence="1">
    <location>
        <begin position="1"/>
        <end position="22"/>
    </location>
</feature>
<feature type="chain" id="PRO_0000003494" description="Vitamin B12 transporter BtuB">
    <location>
        <begin position="23"/>
        <end position="613"/>
    </location>
</feature>
<feature type="domain" description="TBDR plug" evidence="2">
    <location>
        <begin position="41"/>
        <end position="154"/>
    </location>
</feature>
<feature type="domain" description="TBDR beta-barrel" evidence="2">
    <location>
        <begin position="159"/>
        <end position="613"/>
    </location>
</feature>
<feature type="short sequence motif" description="TonB box">
    <location>
        <begin position="29"/>
        <end position="36"/>
    </location>
</feature>
<feature type="short sequence motif" description="TonB C-terminal box">
    <location>
        <begin position="591"/>
        <end position="613"/>
    </location>
</feature>